<gene>
    <name type="primary">cspLB</name>
    <name type="synonym">cspB</name>
    <name type="ordered locus">lmo2016</name>
</gene>
<evidence type="ECO:0000250" key="1"/>
<evidence type="ECO:0000305" key="2"/>
<comment type="subunit">
    <text evidence="1">Homodimer.</text>
</comment>
<comment type="subcellular location">
    <subcellularLocation>
        <location evidence="1">Cytoplasm</location>
    </subcellularLocation>
</comment>
<name>CSPB_LISMO</name>
<proteinExistence type="inferred from homology"/>
<keyword id="KW-0010">Activator</keyword>
<keyword id="KW-0963">Cytoplasm</keyword>
<keyword id="KW-0238">DNA-binding</keyword>
<keyword id="KW-1185">Reference proteome</keyword>
<keyword id="KW-0804">Transcription</keyword>
<keyword id="KW-0805">Transcription regulation</keyword>
<accession>P0A357</accession>
<accession>P96791</accession>
<accession>Q9EXG0</accession>
<organism>
    <name type="scientific">Listeria monocytogenes serovar 1/2a (strain ATCC BAA-679 / EGD-e)</name>
    <dbReference type="NCBI Taxonomy" id="169963"/>
    <lineage>
        <taxon>Bacteria</taxon>
        <taxon>Bacillati</taxon>
        <taxon>Bacillota</taxon>
        <taxon>Bacilli</taxon>
        <taxon>Bacillales</taxon>
        <taxon>Listeriaceae</taxon>
        <taxon>Listeria</taxon>
    </lineage>
</organism>
<reference key="1">
    <citation type="submission" date="1997-03" db="EMBL/GenBank/DDBJ databases">
        <authorList>
            <person name="Barnard F.M."/>
            <person name="Francis K.P."/>
            <person name="Rees C.E.D."/>
            <person name="Stewart G.S.A.B."/>
        </authorList>
    </citation>
    <scope>NUCLEOTIDE SEQUENCE [GENOMIC DNA]</scope>
    <source>
        <strain>ATCC 23074 / AT-25 / Serotype 4b</strain>
    </source>
</reference>
<reference key="2">
    <citation type="submission" date="2001-01" db="EMBL/GenBank/DDBJ databases">
        <title>Identification and characterization of the cold shock protein CspLB from Listeria monocytogenes.</title>
        <authorList>
            <person name="Domann E."/>
            <person name="Busch E.M."/>
            <person name="Chakraborty T."/>
        </authorList>
    </citation>
    <scope>NUCLEOTIDE SEQUENCE [GENOMIC DNA]</scope>
    <source>
        <strain>EGD / Serovar 1/2a</strain>
    </source>
</reference>
<reference key="3">
    <citation type="journal article" date="2001" name="Science">
        <title>Comparative genomics of Listeria species.</title>
        <authorList>
            <person name="Glaser P."/>
            <person name="Frangeul L."/>
            <person name="Buchrieser C."/>
            <person name="Rusniok C."/>
            <person name="Amend A."/>
            <person name="Baquero F."/>
            <person name="Berche P."/>
            <person name="Bloecker H."/>
            <person name="Brandt P."/>
            <person name="Chakraborty T."/>
            <person name="Charbit A."/>
            <person name="Chetouani F."/>
            <person name="Couve E."/>
            <person name="de Daruvar A."/>
            <person name="Dehoux P."/>
            <person name="Domann E."/>
            <person name="Dominguez-Bernal G."/>
            <person name="Duchaud E."/>
            <person name="Durant L."/>
            <person name="Dussurget O."/>
            <person name="Entian K.-D."/>
            <person name="Fsihi H."/>
            <person name="Garcia-del Portillo F."/>
            <person name="Garrido P."/>
            <person name="Gautier L."/>
            <person name="Goebel W."/>
            <person name="Gomez-Lopez N."/>
            <person name="Hain T."/>
            <person name="Hauf J."/>
            <person name="Jackson D."/>
            <person name="Jones L.-M."/>
            <person name="Kaerst U."/>
            <person name="Kreft J."/>
            <person name="Kuhn M."/>
            <person name="Kunst F."/>
            <person name="Kurapkat G."/>
            <person name="Madueno E."/>
            <person name="Maitournam A."/>
            <person name="Mata Vicente J."/>
            <person name="Ng E."/>
            <person name="Nedjari H."/>
            <person name="Nordsiek G."/>
            <person name="Novella S."/>
            <person name="de Pablos B."/>
            <person name="Perez-Diaz J.-C."/>
            <person name="Purcell R."/>
            <person name="Remmel B."/>
            <person name="Rose M."/>
            <person name="Schlueter T."/>
            <person name="Simoes N."/>
            <person name="Tierrez A."/>
            <person name="Vazquez-Boland J.-A."/>
            <person name="Voss H."/>
            <person name="Wehland J."/>
            <person name="Cossart P."/>
        </authorList>
    </citation>
    <scope>NUCLEOTIDE SEQUENCE [LARGE SCALE GENOMIC DNA]</scope>
    <source>
        <strain>ATCC BAA-679 / EGD-e</strain>
    </source>
</reference>
<sequence>MQTGTVKWFNSEKGFGFIEVEGGDDVFVHFSAIEGEGFKTLDEGQSVEFEIVEGQRGPQAEKVTKL</sequence>
<feature type="chain" id="PRO_0000100310" description="Cold shock-like protein CspLB">
    <location>
        <begin position="1"/>
        <end position="66"/>
    </location>
</feature>
<feature type="domain" description="CSD">
    <location>
        <begin position="4"/>
        <end position="63"/>
    </location>
</feature>
<feature type="sequence conflict" description="In Ref. 1; AAB48629." evidence="2" ref="1">
    <original>V</original>
    <variation>I</variation>
    <location>
        <position position="26"/>
    </location>
</feature>
<dbReference type="EMBL" id="U90213">
    <property type="protein sequence ID" value="AAB48629.1"/>
    <property type="molecule type" value="Genomic_DNA"/>
</dbReference>
<dbReference type="EMBL" id="AJ012350">
    <property type="protein sequence ID" value="CAC20631.1"/>
    <property type="molecule type" value="Genomic_DNA"/>
</dbReference>
<dbReference type="EMBL" id="AL591981">
    <property type="protein sequence ID" value="CAD00094.1"/>
    <property type="molecule type" value="Genomic_DNA"/>
</dbReference>
<dbReference type="PIR" id="AH1326">
    <property type="entry name" value="AH1326"/>
</dbReference>
<dbReference type="RefSeq" id="NP_465540.1">
    <property type="nucleotide sequence ID" value="NC_003210.1"/>
</dbReference>
<dbReference type="RefSeq" id="WP_003723180.1">
    <property type="nucleotide sequence ID" value="NZ_CP149495.1"/>
</dbReference>
<dbReference type="SMR" id="P0A357"/>
<dbReference type="STRING" id="169963.gene:17594701"/>
<dbReference type="PaxDb" id="169963-lmo2016"/>
<dbReference type="EnsemblBacteria" id="CAD00094">
    <property type="protein sequence ID" value="CAD00094"/>
    <property type="gene ID" value="CAD00094"/>
</dbReference>
<dbReference type="GeneID" id="93235463"/>
<dbReference type="GeneID" id="985343"/>
<dbReference type="KEGG" id="lmo:lmo2016"/>
<dbReference type="PATRIC" id="fig|169963.11.peg.2064"/>
<dbReference type="eggNOG" id="COG1278">
    <property type="taxonomic scope" value="Bacteria"/>
</dbReference>
<dbReference type="HOGENOM" id="CLU_117621_6_1_9"/>
<dbReference type="OrthoDB" id="9805039at2"/>
<dbReference type="PhylomeDB" id="P0A357"/>
<dbReference type="BioCyc" id="LMON169963:LMO2016-MONOMER"/>
<dbReference type="PHI-base" id="PHI:7638"/>
<dbReference type="Proteomes" id="UP000000817">
    <property type="component" value="Chromosome"/>
</dbReference>
<dbReference type="GO" id="GO:0005737">
    <property type="term" value="C:cytoplasm"/>
    <property type="evidence" value="ECO:0007669"/>
    <property type="project" value="UniProtKB-SubCell"/>
</dbReference>
<dbReference type="GO" id="GO:0003677">
    <property type="term" value="F:DNA binding"/>
    <property type="evidence" value="ECO:0007669"/>
    <property type="project" value="UniProtKB-KW"/>
</dbReference>
<dbReference type="GO" id="GO:0003676">
    <property type="term" value="F:nucleic acid binding"/>
    <property type="evidence" value="ECO:0000318"/>
    <property type="project" value="GO_Central"/>
</dbReference>
<dbReference type="GO" id="GO:0010468">
    <property type="term" value="P:regulation of gene expression"/>
    <property type="evidence" value="ECO:0000318"/>
    <property type="project" value="GO_Central"/>
</dbReference>
<dbReference type="GO" id="GO:0043488">
    <property type="term" value="P:regulation of mRNA stability"/>
    <property type="evidence" value="ECO:0000316"/>
    <property type="project" value="CACAO"/>
</dbReference>
<dbReference type="CDD" id="cd04458">
    <property type="entry name" value="CSP_CDS"/>
    <property type="match status" value="1"/>
</dbReference>
<dbReference type="FunFam" id="2.40.50.140:FF:000006">
    <property type="entry name" value="Cold shock protein CspC"/>
    <property type="match status" value="1"/>
</dbReference>
<dbReference type="Gene3D" id="6.20.370.130">
    <property type="match status" value="1"/>
</dbReference>
<dbReference type="Gene3D" id="2.40.50.140">
    <property type="entry name" value="Nucleic acid-binding proteins"/>
    <property type="match status" value="1"/>
</dbReference>
<dbReference type="InterPro" id="IPR012156">
    <property type="entry name" value="Cold_shock_CspA"/>
</dbReference>
<dbReference type="InterPro" id="IPR050181">
    <property type="entry name" value="Cold_shock_domain"/>
</dbReference>
<dbReference type="InterPro" id="IPR011129">
    <property type="entry name" value="CSD"/>
</dbReference>
<dbReference type="InterPro" id="IPR019844">
    <property type="entry name" value="CSD_CS"/>
</dbReference>
<dbReference type="InterPro" id="IPR002059">
    <property type="entry name" value="CSP_DNA-bd"/>
</dbReference>
<dbReference type="InterPro" id="IPR012340">
    <property type="entry name" value="NA-bd_OB-fold"/>
</dbReference>
<dbReference type="PANTHER" id="PTHR11544">
    <property type="entry name" value="COLD SHOCK DOMAIN CONTAINING PROTEINS"/>
    <property type="match status" value="1"/>
</dbReference>
<dbReference type="Pfam" id="PF00313">
    <property type="entry name" value="CSD"/>
    <property type="match status" value="1"/>
</dbReference>
<dbReference type="PIRSF" id="PIRSF002599">
    <property type="entry name" value="Cold_shock_A"/>
    <property type="match status" value="1"/>
</dbReference>
<dbReference type="PRINTS" id="PR00050">
    <property type="entry name" value="COLDSHOCK"/>
</dbReference>
<dbReference type="SMART" id="SM00357">
    <property type="entry name" value="CSP"/>
    <property type="match status" value="1"/>
</dbReference>
<dbReference type="SUPFAM" id="SSF50249">
    <property type="entry name" value="Nucleic acid-binding proteins"/>
    <property type="match status" value="1"/>
</dbReference>
<dbReference type="PROSITE" id="PS00352">
    <property type="entry name" value="CSD_1"/>
    <property type="match status" value="1"/>
</dbReference>
<dbReference type="PROSITE" id="PS51857">
    <property type="entry name" value="CSD_2"/>
    <property type="match status" value="1"/>
</dbReference>
<protein>
    <recommendedName>
        <fullName>Cold shock-like protein CspLB</fullName>
        <shortName>CspB</shortName>
    </recommendedName>
</protein>